<evidence type="ECO:0000250" key="1"/>
<evidence type="ECO:0000255" key="2"/>
<evidence type="ECO:0000269" key="3">
    <source>
    </source>
</evidence>
<evidence type="ECO:0000269" key="4">
    <source>
    </source>
</evidence>
<evidence type="ECO:0000305" key="5"/>
<protein>
    <recommendedName>
        <fullName>Receptor-transporting protein 1</fullName>
    </recommendedName>
    <alternativeName>
        <fullName>3CxxC-type zinc finger protein 1</fullName>
    </alternativeName>
</protein>
<comment type="function">
    <text evidence="1">Specifically promotes functional cell surface expression of olfactory receptors, but not of other GPCRs.</text>
</comment>
<comment type="subunit">
    <text evidence="1">Interacts with olfactory receptors.</text>
</comment>
<comment type="subcellular location">
    <subcellularLocation>
        <location evidence="1">Cell membrane</location>
        <topology evidence="1">Single-pass type III membrane protein</topology>
    </subcellularLocation>
    <text evidence="1">Effective cell surface expression depends upon interaction with olfactory receptors.</text>
</comment>
<comment type="tissue specificity">
    <text evidence="3">Expressed in testis.</text>
</comment>
<comment type="similarity">
    <text evidence="5">Belongs to the TMEM7 family.</text>
</comment>
<proteinExistence type="evidence at protein level"/>
<feature type="chain" id="PRO_0000181988" description="Receptor-transporting protein 1">
    <location>
        <begin position="1"/>
        <end position="263"/>
    </location>
</feature>
<feature type="topological domain" description="Cytoplasmic" evidence="2">
    <location>
        <begin position="1"/>
        <end position="238"/>
    </location>
</feature>
<feature type="transmembrane region" description="Helical" evidence="2">
    <location>
        <begin position="239"/>
        <end position="259"/>
    </location>
</feature>
<feature type="topological domain" description="Extracellular" evidence="2">
    <location>
        <begin position="260"/>
        <end position="263"/>
    </location>
</feature>
<feature type="zinc finger region" description="3CxxC-type" evidence="2">
    <location>
        <begin position="88"/>
        <end position="197"/>
    </location>
</feature>
<feature type="sequence variant" id="VAR_036122" description="In a breast cancer sample; somatic mutation." evidence="4">
    <original>R</original>
    <variation>S</variation>
    <location>
        <position position="124"/>
    </location>
</feature>
<feature type="sequence variant" id="VAR_053729" description="In dbSNP:rs35053281.">
    <original>A</original>
    <variation>G</variation>
    <location>
        <position position="212"/>
    </location>
</feature>
<feature type="sequence variant" id="VAR_053730" description="In dbSNP:rs6764714.">
    <original>Q</original>
    <variation>E</variation>
    <location>
        <position position="229"/>
    </location>
</feature>
<sequence>MRIFRPWRLRCPALHLPSLSVFSLRWKLPSLTTDETMCKSVTTDEWKKVFYEKMEEAKPADSWDLIIDPNLKHNVLSPGWKQYLELHASGRFHCSWCWHTWQSPYVVILFHMFLDRAQRAGSVRMRVFKQLCYECGTARLDESSMLEENIEGLVDNLITSLREQCYGERGGQYRIHVASRQDNRRHRGEFCEACQEGIVHWKPSEKLLEEEATTYTFSRAPSPTKSQDQTGSGWNFCSIPWCLFWATVLLLIIYLQFSFRSSV</sequence>
<reference key="1">
    <citation type="journal article" date="2004" name="Genome Res.">
        <title>The status, quality, and expansion of the NIH full-length cDNA project: the Mammalian Gene Collection (MGC).</title>
        <authorList>
            <consortium name="The MGC Project Team"/>
        </authorList>
    </citation>
    <scope>NUCLEOTIDE SEQUENCE [LARGE SCALE MRNA]</scope>
    <source>
        <tissue>Brain</tissue>
    </source>
</reference>
<reference key="2">
    <citation type="journal article" date="2004" name="Cell">
        <title>RTP family members induce functional expression of mammalian odorant receptors.</title>
        <authorList>
            <person name="Saito H."/>
            <person name="Kubota M."/>
            <person name="Roberts R.W."/>
            <person name="Chi Q."/>
            <person name="Matsunami H."/>
        </authorList>
    </citation>
    <scope>NUCLEOTIDE SEQUENCE [MRNA] OF 37-263</scope>
</reference>
<reference key="3">
    <citation type="journal article" date="2006" name="J. Biol. Chem.">
        <title>Members of RTP and REEP gene families influence functional bitter taste receptor expression.</title>
        <authorList>
            <person name="Behrens M."/>
            <person name="Bartelt J."/>
            <person name="Reichling C."/>
            <person name="Winnig M."/>
            <person name="Kuhn C."/>
            <person name="Meyerhof W."/>
        </authorList>
    </citation>
    <scope>TISSUE SPECIFICITY</scope>
</reference>
<reference key="4">
    <citation type="journal article" date="2006" name="Science">
        <title>The consensus coding sequences of human breast and colorectal cancers.</title>
        <authorList>
            <person name="Sjoeblom T."/>
            <person name="Jones S."/>
            <person name="Wood L.D."/>
            <person name="Parsons D.W."/>
            <person name="Lin J."/>
            <person name="Barber T.D."/>
            <person name="Mandelker D."/>
            <person name="Leary R.J."/>
            <person name="Ptak J."/>
            <person name="Silliman N."/>
            <person name="Szabo S."/>
            <person name="Buckhaults P."/>
            <person name="Farrell C."/>
            <person name="Meeh P."/>
            <person name="Markowitz S.D."/>
            <person name="Willis J."/>
            <person name="Dawson D."/>
            <person name="Willson J.K.V."/>
            <person name="Gazdar A.F."/>
            <person name="Hartigan J."/>
            <person name="Wu L."/>
            <person name="Liu C."/>
            <person name="Parmigiani G."/>
            <person name="Park B.H."/>
            <person name="Bachman K.E."/>
            <person name="Papadopoulos N."/>
            <person name="Vogelstein B."/>
            <person name="Kinzler K.W."/>
            <person name="Velculescu V.E."/>
        </authorList>
    </citation>
    <scope>VARIANT [LARGE SCALE ANALYSIS] SER-124</scope>
</reference>
<gene>
    <name type="primary">RTP1</name>
    <name type="synonym">Z3CXXC1</name>
</gene>
<name>RTP1_HUMAN</name>
<organism>
    <name type="scientific">Homo sapiens</name>
    <name type="common">Human</name>
    <dbReference type="NCBI Taxonomy" id="9606"/>
    <lineage>
        <taxon>Eukaryota</taxon>
        <taxon>Metazoa</taxon>
        <taxon>Chordata</taxon>
        <taxon>Craniata</taxon>
        <taxon>Vertebrata</taxon>
        <taxon>Euteleostomi</taxon>
        <taxon>Mammalia</taxon>
        <taxon>Eutheria</taxon>
        <taxon>Euarchontoglires</taxon>
        <taxon>Primates</taxon>
        <taxon>Haplorrhini</taxon>
        <taxon>Catarrhini</taxon>
        <taxon>Hominidae</taxon>
        <taxon>Homo</taxon>
    </lineage>
</organism>
<accession>P59025</accession>
<keyword id="KW-1003">Cell membrane</keyword>
<keyword id="KW-0472">Membrane</keyword>
<keyword id="KW-0479">Metal-binding</keyword>
<keyword id="KW-1267">Proteomics identification</keyword>
<keyword id="KW-1185">Reference proteome</keyword>
<keyword id="KW-0812">Transmembrane</keyword>
<keyword id="KW-1133">Transmembrane helix</keyword>
<keyword id="KW-0862">Zinc</keyword>
<keyword id="KW-0863">Zinc-finger</keyword>
<dbReference type="EMBL" id="BC034744">
    <property type="protein sequence ID" value="AAH34744.4"/>
    <property type="molecule type" value="mRNA"/>
</dbReference>
<dbReference type="EMBL" id="BC065202">
    <property type="protein sequence ID" value="AAH65202.2"/>
    <property type="molecule type" value="mRNA"/>
</dbReference>
<dbReference type="EMBL" id="AY562235">
    <property type="protein sequence ID" value="AAT70680.1"/>
    <property type="molecule type" value="mRNA"/>
</dbReference>
<dbReference type="CCDS" id="CCDS3287.2"/>
<dbReference type="RefSeq" id="NP_714919.2">
    <property type="nucleotide sequence ID" value="NM_153708.3"/>
</dbReference>
<dbReference type="BioGRID" id="126305">
    <property type="interactions" value="1"/>
</dbReference>
<dbReference type="FunCoup" id="P59025">
    <property type="interactions" value="6"/>
</dbReference>
<dbReference type="IntAct" id="P59025">
    <property type="interactions" value="2"/>
</dbReference>
<dbReference type="MINT" id="P59025"/>
<dbReference type="STRING" id="9606.ENSP00000311712"/>
<dbReference type="iPTMnet" id="P59025"/>
<dbReference type="PhosphoSitePlus" id="P59025"/>
<dbReference type="BioMuta" id="RTP1"/>
<dbReference type="DMDM" id="61252249"/>
<dbReference type="MassIVE" id="P59025"/>
<dbReference type="PaxDb" id="9606-ENSP00000311712"/>
<dbReference type="PeptideAtlas" id="P59025"/>
<dbReference type="ProteomicsDB" id="57108"/>
<dbReference type="Antibodypedia" id="46840">
    <property type="antibodies" value="93 antibodies from 18 providers"/>
</dbReference>
<dbReference type="DNASU" id="132112"/>
<dbReference type="Ensembl" id="ENST00000312295.5">
    <property type="protein sequence ID" value="ENSP00000311712.4"/>
    <property type="gene ID" value="ENSG00000175077.6"/>
</dbReference>
<dbReference type="Ensembl" id="ENST00000707985.1">
    <property type="protein sequence ID" value="ENSP00000517059.1"/>
    <property type="gene ID" value="ENSG00000291554.1"/>
</dbReference>
<dbReference type="GeneID" id="132112"/>
<dbReference type="KEGG" id="hsa:132112"/>
<dbReference type="MANE-Select" id="ENST00000312295.5">
    <property type="protein sequence ID" value="ENSP00000311712.4"/>
    <property type="RefSeq nucleotide sequence ID" value="NM_153708.3"/>
    <property type="RefSeq protein sequence ID" value="NP_714919.2"/>
</dbReference>
<dbReference type="UCSC" id="uc003frg.3">
    <property type="organism name" value="human"/>
</dbReference>
<dbReference type="AGR" id="HGNC:28580"/>
<dbReference type="CTD" id="132112"/>
<dbReference type="DisGeNET" id="132112"/>
<dbReference type="GeneCards" id="RTP1"/>
<dbReference type="HGNC" id="HGNC:28580">
    <property type="gene designation" value="RTP1"/>
</dbReference>
<dbReference type="HPA" id="ENSG00000175077">
    <property type="expression patterns" value="Tissue enhanced (brain)"/>
</dbReference>
<dbReference type="MIM" id="609137">
    <property type="type" value="gene"/>
</dbReference>
<dbReference type="neXtProt" id="NX_P59025"/>
<dbReference type="OpenTargets" id="ENSG00000175077"/>
<dbReference type="PharmGKB" id="PA143485604"/>
<dbReference type="VEuPathDB" id="HostDB:ENSG00000175077"/>
<dbReference type="eggNOG" id="ENOG502S1UZ">
    <property type="taxonomic scope" value="Eukaryota"/>
</dbReference>
<dbReference type="GeneTree" id="ENSGT00940000161858"/>
<dbReference type="HOGENOM" id="CLU_092465_0_0_1"/>
<dbReference type="InParanoid" id="P59025"/>
<dbReference type="OMA" id="WDFIIDP"/>
<dbReference type="OrthoDB" id="9754137at2759"/>
<dbReference type="PAN-GO" id="P59025">
    <property type="GO annotations" value="5 GO annotations based on evolutionary models"/>
</dbReference>
<dbReference type="PhylomeDB" id="P59025"/>
<dbReference type="TreeFam" id="TF333246"/>
<dbReference type="PathwayCommons" id="P59025"/>
<dbReference type="Reactome" id="R-HSA-9752946">
    <property type="pathway name" value="Expression and translocation of olfactory receptors"/>
</dbReference>
<dbReference type="SignaLink" id="P59025"/>
<dbReference type="BioGRID-ORCS" id="132112">
    <property type="hits" value="12 hits in 1138 CRISPR screens"/>
</dbReference>
<dbReference type="GenomeRNAi" id="132112"/>
<dbReference type="Pharos" id="P59025">
    <property type="development level" value="Tbio"/>
</dbReference>
<dbReference type="PRO" id="PR:P59025"/>
<dbReference type="Proteomes" id="UP000005640">
    <property type="component" value="Chromosome 3"/>
</dbReference>
<dbReference type="RNAct" id="P59025">
    <property type="molecule type" value="protein"/>
</dbReference>
<dbReference type="Bgee" id="ENSG00000175077">
    <property type="expression patterns" value="Expressed in oocyte and 55 other cell types or tissues"/>
</dbReference>
<dbReference type="GO" id="GO:0009986">
    <property type="term" value="C:cell surface"/>
    <property type="evidence" value="ECO:0000314"/>
    <property type="project" value="HGNC-UCL"/>
</dbReference>
<dbReference type="GO" id="GO:0005886">
    <property type="term" value="C:plasma membrane"/>
    <property type="evidence" value="ECO:0007669"/>
    <property type="project" value="UniProtKB-SubCell"/>
</dbReference>
<dbReference type="GO" id="GO:0031849">
    <property type="term" value="F:olfactory receptor binding"/>
    <property type="evidence" value="ECO:0000315"/>
    <property type="project" value="HGNC-UCL"/>
</dbReference>
<dbReference type="GO" id="GO:0008270">
    <property type="term" value="F:zinc ion binding"/>
    <property type="evidence" value="ECO:0007669"/>
    <property type="project" value="UniProtKB-KW"/>
</dbReference>
<dbReference type="GO" id="GO:0001580">
    <property type="term" value="P:detection of chemical stimulus involved in sensory perception of bitter taste"/>
    <property type="evidence" value="ECO:0000318"/>
    <property type="project" value="GO_Central"/>
</dbReference>
<dbReference type="GO" id="GO:0051205">
    <property type="term" value="P:protein insertion into membrane"/>
    <property type="evidence" value="ECO:0000314"/>
    <property type="project" value="HGNC-UCL"/>
</dbReference>
<dbReference type="GO" id="GO:0006612">
    <property type="term" value="P:protein targeting to membrane"/>
    <property type="evidence" value="ECO:0000318"/>
    <property type="project" value="GO_Central"/>
</dbReference>
<dbReference type="InterPro" id="IPR026096">
    <property type="entry name" value="R-trans_p"/>
</dbReference>
<dbReference type="InterPro" id="IPR027377">
    <property type="entry name" value="ZAR1/RTP1-5-like_Znf-3CxxC"/>
</dbReference>
<dbReference type="PANTHER" id="PTHR14402">
    <property type="entry name" value="RECEPTOR TRANSPORTING PROTEIN"/>
    <property type="match status" value="1"/>
</dbReference>
<dbReference type="PANTHER" id="PTHR14402:SF19">
    <property type="entry name" value="RECEPTOR-TRANSPORTING PROTEIN 1"/>
    <property type="match status" value="1"/>
</dbReference>
<dbReference type="Pfam" id="PF13695">
    <property type="entry name" value="Zn_ribbon_3CxxC"/>
    <property type="match status" value="1"/>
</dbReference>
<dbReference type="SMART" id="SM01328">
    <property type="entry name" value="zf-3CxxC"/>
    <property type="match status" value="1"/>
</dbReference>